<gene>
    <name evidence="1" type="primary">rsmH</name>
    <name type="synonym">mraW</name>
    <name type="ordered locus">MYCGA4000</name>
    <name type="ORF">MGA_0029</name>
</gene>
<proteinExistence type="inferred from homology"/>
<protein>
    <recommendedName>
        <fullName evidence="1">Ribosomal RNA small subunit methyltransferase H</fullName>
        <ecNumber evidence="1">2.1.1.199</ecNumber>
    </recommendedName>
    <alternativeName>
        <fullName evidence="1">16S rRNA m(4)C1402 methyltransferase</fullName>
    </alternativeName>
    <alternativeName>
        <fullName evidence="1">rRNA (cytosine-N(4)-)-methyltransferase RsmH</fullName>
    </alternativeName>
</protein>
<sequence>MMIINNQIHYPVLLKEVIENLITTKDGIYLDLTIGFGGHSYNIIKILDQKARLIGFDQDLKAIAHCNQLFSEFNNVSLINDNFVNLKKHLQLMQIDNIDGCLIDLGVSSYQLDQADRGFSYHSLGRLDMRMDQNKAVDATKLIQNSTVSELVKIMKNYGEIKDPYRVVVALKKAFEKKELNTLEVVELIKKHVNKAELYANKHPARRYFQALRIAVNNELEVLEKLLSYLPSYLNKGGKIAIITFHSLEEKIVKKVFRHLASISSLNNLPINNELLKKYHNHFNKGLSPTQSELETNRRSRSAKLFVLEKINN</sequence>
<keyword id="KW-0963">Cytoplasm</keyword>
<keyword id="KW-0489">Methyltransferase</keyword>
<keyword id="KW-1185">Reference proteome</keyword>
<keyword id="KW-0698">rRNA processing</keyword>
<keyword id="KW-0949">S-adenosyl-L-methionine</keyword>
<keyword id="KW-0808">Transferase</keyword>
<accession>Q7NB79</accession>
<reference key="1">
    <citation type="journal article" date="2003" name="Microbiology">
        <title>The complete genome sequence of the avian pathogen Mycoplasma gallisepticum strain R(low).</title>
        <authorList>
            <person name="Papazisi L."/>
            <person name="Gorton T.S."/>
            <person name="Kutish G."/>
            <person name="Markham P.F."/>
            <person name="Browning G.F."/>
            <person name="Nguyen D.K."/>
            <person name="Swartzell S."/>
            <person name="Madan A."/>
            <person name="Mahairas G."/>
            <person name="Geary S.J."/>
        </authorList>
    </citation>
    <scope>NUCLEOTIDE SEQUENCE [LARGE SCALE GENOMIC DNA]</scope>
    <source>
        <strain>R(low / passage 15 / clone 2)</strain>
    </source>
</reference>
<comment type="function">
    <text evidence="1">Specifically methylates the N4 position of cytidine in position 1402 (C1402) of 16S rRNA.</text>
</comment>
<comment type="catalytic activity">
    <reaction evidence="1">
        <text>cytidine(1402) in 16S rRNA + S-adenosyl-L-methionine = N(4)-methylcytidine(1402) in 16S rRNA + S-adenosyl-L-homocysteine + H(+)</text>
        <dbReference type="Rhea" id="RHEA:42928"/>
        <dbReference type="Rhea" id="RHEA-COMP:10286"/>
        <dbReference type="Rhea" id="RHEA-COMP:10287"/>
        <dbReference type="ChEBI" id="CHEBI:15378"/>
        <dbReference type="ChEBI" id="CHEBI:57856"/>
        <dbReference type="ChEBI" id="CHEBI:59789"/>
        <dbReference type="ChEBI" id="CHEBI:74506"/>
        <dbReference type="ChEBI" id="CHEBI:82748"/>
        <dbReference type="EC" id="2.1.1.199"/>
    </reaction>
</comment>
<comment type="subcellular location">
    <subcellularLocation>
        <location evidence="1">Cytoplasm</location>
    </subcellularLocation>
</comment>
<comment type="similarity">
    <text evidence="1">Belongs to the methyltransferase superfamily. RsmH family.</text>
</comment>
<organism>
    <name type="scientific">Mycoplasmoides gallisepticum (strain R(low / passage 15 / clone 2))</name>
    <name type="common">Mycoplasma gallisepticum</name>
    <dbReference type="NCBI Taxonomy" id="710127"/>
    <lineage>
        <taxon>Bacteria</taxon>
        <taxon>Bacillati</taxon>
        <taxon>Mycoplasmatota</taxon>
        <taxon>Mycoplasmoidales</taxon>
        <taxon>Mycoplasmoidaceae</taxon>
        <taxon>Mycoplasmoides</taxon>
    </lineage>
</organism>
<dbReference type="EC" id="2.1.1.199" evidence="1"/>
<dbReference type="EMBL" id="AE015450">
    <property type="protein sequence ID" value="AAP56750.2"/>
    <property type="molecule type" value="Genomic_DNA"/>
</dbReference>
<dbReference type="RefSeq" id="WP_011113646.1">
    <property type="nucleotide sequence ID" value="NC_004829.2"/>
</dbReference>
<dbReference type="SMR" id="Q7NB79"/>
<dbReference type="GeneID" id="93510229"/>
<dbReference type="KEGG" id="mga:MGA_0029"/>
<dbReference type="PATRIC" id="fig|233150.7.peg.450"/>
<dbReference type="HOGENOM" id="CLU_038422_2_0_14"/>
<dbReference type="OrthoDB" id="9806637at2"/>
<dbReference type="Proteomes" id="UP000001418">
    <property type="component" value="Chromosome"/>
</dbReference>
<dbReference type="GO" id="GO:0005737">
    <property type="term" value="C:cytoplasm"/>
    <property type="evidence" value="ECO:0007669"/>
    <property type="project" value="UniProtKB-SubCell"/>
</dbReference>
<dbReference type="GO" id="GO:0071424">
    <property type="term" value="F:rRNA (cytosine-N4-)-methyltransferase activity"/>
    <property type="evidence" value="ECO:0007669"/>
    <property type="project" value="UniProtKB-UniRule"/>
</dbReference>
<dbReference type="GO" id="GO:0070475">
    <property type="term" value="P:rRNA base methylation"/>
    <property type="evidence" value="ECO:0007669"/>
    <property type="project" value="UniProtKB-UniRule"/>
</dbReference>
<dbReference type="Gene3D" id="1.10.150.170">
    <property type="entry name" value="Putative methyltransferase TM0872, insert domain"/>
    <property type="match status" value="1"/>
</dbReference>
<dbReference type="Gene3D" id="3.40.50.150">
    <property type="entry name" value="Vaccinia Virus protein VP39"/>
    <property type="match status" value="1"/>
</dbReference>
<dbReference type="HAMAP" id="MF_01007">
    <property type="entry name" value="16SrRNA_methyltr_H"/>
    <property type="match status" value="1"/>
</dbReference>
<dbReference type="InterPro" id="IPR002903">
    <property type="entry name" value="RsmH"/>
</dbReference>
<dbReference type="InterPro" id="IPR023397">
    <property type="entry name" value="SAM-dep_MeTrfase_MraW_recog"/>
</dbReference>
<dbReference type="InterPro" id="IPR029063">
    <property type="entry name" value="SAM-dependent_MTases_sf"/>
</dbReference>
<dbReference type="NCBIfam" id="TIGR00006">
    <property type="entry name" value="16S rRNA (cytosine(1402)-N(4))-methyltransferase RsmH"/>
    <property type="match status" value="1"/>
</dbReference>
<dbReference type="PANTHER" id="PTHR11265:SF0">
    <property type="entry name" value="12S RRNA N4-METHYLCYTIDINE METHYLTRANSFERASE"/>
    <property type="match status" value="1"/>
</dbReference>
<dbReference type="PANTHER" id="PTHR11265">
    <property type="entry name" value="S-ADENOSYL-METHYLTRANSFERASE MRAW"/>
    <property type="match status" value="1"/>
</dbReference>
<dbReference type="Pfam" id="PF01795">
    <property type="entry name" value="Methyltransf_5"/>
    <property type="match status" value="1"/>
</dbReference>
<dbReference type="PIRSF" id="PIRSF004486">
    <property type="entry name" value="MraW"/>
    <property type="match status" value="1"/>
</dbReference>
<dbReference type="SUPFAM" id="SSF81799">
    <property type="entry name" value="Putative methyltransferase TM0872, insert domain"/>
    <property type="match status" value="1"/>
</dbReference>
<dbReference type="SUPFAM" id="SSF53335">
    <property type="entry name" value="S-adenosyl-L-methionine-dependent methyltransferases"/>
    <property type="match status" value="1"/>
</dbReference>
<name>RSMH_MYCGA</name>
<evidence type="ECO:0000255" key="1">
    <source>
        <dbReference type="HAMAP-Rule" id="MF_01007"/>
    </source>
</evidence>
<feature type="chain" id="PRO_0000108657" description="Ribosomal RNA small subunit methyltransferase H">
    <location>
        <begin position="1"/>
        <end position="313"/>
    </location>
</feature>
<feature type="binding site" evidence="1">
    <location>
        <begin position="37"/>
        <end position="39"/>
    </location>
    <ligand>
        <name>S-adenosyl-L-methionine</name>
        <dbReference type="ChEBI" id="CHEBI:59789"/>
    </ligand>
</feature>
<feature type="binding site" evidence="1">
    <location>
        <position position="57"/>
    </location>
    <ligand>
        <name>S-adenosyl-L-methionine</name>
        <dbReference type="ChEBI" id="CHEBI:59789"/>
    </ligand>
</feature>
<feature type="binding site" evidence="1">
    <location>
        <position position="83"/>
    </location>
    <ligand>
        <name>S-adenosyl-L-methionine</name>
        <dbReference type="ChEBI" id="CHEBI:59789"/>
    </ligand>
</feature>
<feature type="binding site" evidence="1">
    <location>
        <position position="104"/>
    </location>
    <ligand>
        <name>S-adenosyl-L-methionine</name>
        <dbReference type="ChEBI" id="CHEBI:59789"/>
    </ligand>
</feature>
<feature type="binding site" evidence="1">
    <location>
        <position position="111"/>
    </location>
    <ligand>
        <name>S-adenosyl-L-methionine</name>
        <dbReference type="ChEBI" id="CHEBI:59789"/>
    </ligand>
</feature>